<feature type="chain" id="PRO_0000079768" description="Disabled homolog 1">
    <location>
        <begin position="1"/>
        <end position="555"/>
    </location>
</feature>
<feature type="domain" description="PID" evidence="4">
    <location>
        <begin position="36"/>
        <end position="189"/>
    </location>
</feature>
<feature type="region of interest" description="Disordered" evidence="5">
    <location>
        <begin position="1"/>
        <end position="26"/>
    </location>
</feature>
<feature type="region of interest" description="Disordered" evidence="5">
    <location>
        <begin position="384"/>
        <end position="410"/>
    </location>
</feature>
<feature type="region of interest" description="Disordered" evidence="5">
    <location>
        <begin position="418"/>
        <end position="437"/>
    </location>
</feature>
<feature type="region of interest" description="Disordered" evidence="5">
    <location>
        <begin position="468"/>
        <end position="555"/>
    </location>
</feature>
<feature type="compositionally biased region" description="Basic and acidic residues" evidence="5">
    <location>
        <begin position="15"/>
        <end position="26"/>
    </location>
</feature>
<feature type="compositionally biased region" description="Polar residues" evidence="5">
    <location>
        <begin position="391"/>
        <end position="403"/>
    </location>
</feature>
<feature type="compositionally biased region" description="Low complexity" evidence="5">
    <location>
        <begin position="470"/>
        <end position="479"/>
    </location>
</feature>
<feature type="compositionally biased region" description="Low complexity" evidence="5">
    <location>
        <begin position="487"/>
        <end position="501"/>
    </location>
</feature>
<feature type="compositionally biased region" description="Acidic residues" evidence="5">
    <location>
        <begin position="504"/>
        <end position="513"/>
    </location>
</feature>
<feature type="modified residue" description="Phosphotyrosine" evidence="2">
    <location>
        <position position="198"/>
    </location>
</feature>
<feature type="modified residue" description="Phosphotyrosine" evidence="2">
    <location>
        <position position="220"/>
    </location>
</feature>
<feature type="modified residue" description="Phosphotyrosine" evidence="2">
    <location>
        <position position="232"/>
    </location>
</feature>
<feature type="modified residue" description="Phosphoserine; by CDK5" evidence="2">
    <location>
        <position position="491"/>
    </location>
</feature>
<sequence>MSTETELQVAVKTSAKKDSRKKGQDRSEATLIKRFKGEGVRYKAKLIGIDEVSAARGDKLCQDSMMKLKGVVAGARSKGEHKQKIFLTISFGGIKIFDEKTGALQHHHAVHEISYIAKDTTDHRAFGYACGKEGNHRFVAIKTAQAAEPVILDLRDLFQLIYELKQREELEKKAQKDKQCEQAVYQTILEEDVEDPVYQYIVFEAGHEPIRDPETEENIYQVPTSQKKEGVYDVPKSQPVSAVTQLELFGDMSTPPDITSPPTPATPGDAFIPSSSQTLPASADVFGSVPFSTAAVPSGYVAMGAVLPSFWGQQPLVQQQMVMGAQPPVAQVMPGAQPIAWGQPGLFPATQQPWPTVAGQFPPAAFMPTQTVMPLPAAMFQGPLTPLATVPGTSDSTRPSPQTDKPRQKMGKETFKDFQMAQPPPVPSRKPDQPSLTCTSEAFSSYFNKVGVAQDTDDCDDFDISQLNLTPVTSTTPSTNSPPTPAPRQSSPSKSSASHASDPTTDDIFEEGFESPSKSEEQEAPDGSQASSNSDPFGEPSGEPSGDNISPQAGS</sequence>
<comment type="function">
    <text evidence="2">Signaling adapter of the reelin-mediated signaling pathway, which regulates the migration and differentiation of postmitotic neurons during brain development. Mediates intracellular transduction of Reelin signaling following reelin (RELN)-binding to its receptor: acts by docking proteins through its phosphotyrosine residues and PID domain.</text>
</comment>
<comment type="subunit">
    <text evidence="1 2 3">Associates with the SH2 domains of SRC, FYN and ABL. Interacts (phosphorylated on tyrosine residues) with CRK and CRKL (via respective SH2 domain). Interacts with DAB2IP, SIAH1, LRP8 and VLDLR. Interacts with LRP1. Interacts with APLP1 (via NPXY motif). Interacts with DAB2IP (By similarity). Interacts with ZSWIM8 (By similarity).</text>
</comment>
<comment type="subcellular location">
    <subcellularLocation>
        <location evidence="2">Cytoplasm</location>
    </subcellularLocation>
</comment>
<comment type="domain">
    <text evidence="2">The PID domain specifically binds to the Asn-Pro-Xaa-Tyr(P) motif found in many tyrosine-phosphorylated proteins.</text>
</comment>
<comment type="PTM">
    <text evidence="2">Phosphorylated by FYN on Tyr-198 and Tyr-220 upon reelin induction in embryonic neurons. Also phosphorylated on Ser-491 independently of reelin signaling.</text>
</comment>
<comment type="PTM">
    <text evidence="1 2">Ubiquitinated by various cullin-5-RING E3 ubiquitin-protein ligase complexes (ECS complexes) following ligand-binding and phosphorylation, leading to its degradation. Ubiquitinated by the ECS(SOCS7) complex in the cortical plate of the developing cerebral cortex following ligand-binding and phosphorylation by FYN, leading to its degradation by the proteasome. Recognized by ZSWIM8 through a disorder targets misorder mechanism that eliminates misfolded DAB1 via ubiquitination and proteasomal degradation.</text>
</comment>
<proteinExistence type="evidence at transcript level"/>
<name>DAB1_MACFA</name>
<dbReference type="EMBL" id="AB055282">
    <property type="protein sequence ID" value="BAB21906.1"/>
    <property type="molecule type" value="mRNA"/>
</dbReference>
<dbReference type="RefSeq" id="NP_001270758.1">
    <property type="nucleotide sequence ID" value="NM_001283829.1"/>
</dbReference>
<dbReference type="SMR" id="Q9BGX5"/>
<dbReference type="STRING" id="9541.ENSMFAP00000024996"/>
<dbReference type="eggNOG" id="KOG3535">
    <property type="taxonomic scope" value="Eukaryota"/>
</dbReference>
<dbReference type="Proteomes" id="UP000233100">
    <property type="component" value="Unplaced"/>
</dbReference>
<dbReference type="GO" id="GO:0005737">
    <property type="term" value="C:cytoplasm"/>
    <property type="evidence" value="ECO:0000250"/>
    <property type="project" value="UniProtKB"/>
</dbReference>
<dbReference type="GO" id="GO:0043231">
    <property type="term" value="C:intracellular membrane-bounded organelle"/>
    <property type="evidence" value="ECO:0007669"/>
    <property type="project" value="TreeGrafter"/>
</dbReference>
<dbReference type="GO" id="GO:0035591">
    <property type="term" value="F:signaling adaptor activity"/>
    <property type="evidence" value="ECO:0000250"/>
    <property type="project" value="UniProtKB"/>
</dbReference>
<dbReference type="GO" id="GO:0001764">
    <property type="term" value="P:neuron migration"/>
    <property type="evidence" value="ECO:0007669"/>
    <property type="project" value="TreeGrafter"/>
</dbReference>
<dbReference type="CDD" id="cd01215">
    <property type="entry name" value="PTB_Dab"/>
    <property type="match status" value="1"/>
</dbReference>
<dbReference type="FunFam" id="2.30.29.30:FF:000035">
    <property type="entry name" value="Disabled homolog 2 isoform 1"/>
    <property type="match status" value="1"/>
</dbReference>
<dbReference type="Gene3D" id="2.30.29.30">
    <property type="entry name" value="Pleckstrin-homology domain (PH domain)/Phosphotyrosine-binding domain (PTB)"/>
    <property type="match status" value="1"/>
</dbReference>
<dbReference type="InterPro" id="IPR048559">
    <property type="entry name" value="DAB1/2_SBM"/>
</dbReference>
<dbReference type="InterPro" id="IPR048561">
    <property type="entry name" value="Dab_PTB"/>
</dbReference>
<dbReference type="InterPro" id="IPR011993">
    <property type="entry name" value="PH-like_dom_sf"/>
</dbReference>
<dbReference type="InterPro" id="IPR006020">
    <property type="entry name" value="PTB/PI_dom"/>
</dbReference>
<dbReference type="PANTHER" id="PTHR47695:SF4">
    <property type="entry name" value="DISABLED HOMOLOG 1"/>
    <property type="match status" value="1"/>
</dbReference>
<dbReference type="PANTHER" id="PTHR47695">
    <property type="entry name" value="PID DOMAIN-CONTAINING PROTEIN"/>
    <property type="match status" value="1"/>
</dbReference>
<dbReference type="Pfam" id="PF21792">
    <property type="entry name" value="DAB2_SBM"/>
    <property type="match status" value="1"/>
</dbReference>
<dbReference type="Pfam" id="PF00640">
    <property type="entry name" value="PID"/>
    <property type="match status" value="1"/>
</dbReference>
<dbReference type="SMART" id="SM00462">
    <property type="entry name" value="PTB"/>
    <property type="match status" value="1"/>
</dbReference>
<dbReference type="SUPFAM" id="SSF50729">
    <property type="entry name" value="PH domain-like"/>
    <property type="match status" value="1"/>
</dbReference>
<dbReference type="PROSITE" id="PS01179">
    <property type="entry name" value="PID"/>
    <property type="match status" value="1"/>
</dbReference>
<protein>
    <recommendedName>
        <fullName>Disabled homolog 1</fullName>
    </recommendedName>
</protein>
<accession>Q9BGX5</accession>
<keyword id="KW-0963">Cytoplasm</keyword>
<keyword id="KW-0217">Developmental protein</keyword>
<keyword id="KW-0221">Differentiation</keyword>
<keyword id="KW-0524">Neurogenesis</keyword>
<keyword id="KW-0597">Phosphoprotein</keyword>
<keyword id="KW-1185">Reference proteome</keyword>
<keyword id="KW-0832">Ubl conjugation</keyword>
<evidence type="ECO:0000250" key="1">
    <source>
        <dbReference type="UniProtKB" id="O75553"/>
    </source>
</evidence>
<evidence type="ECO:0000250" key="2">
    <source>
        <dbReference type="UniProtKB" id="P97318"/>
    </source>
</evidence>
<evidence type="ECO:0000250" key="3">
    <source>
        <dbReference type="UniProtKB" id="Q8CJH2"/>
    </source>
</evidence>
<evidence type="ECO:0000255" key="4">
    <source>
        <dbReference type="PROSITE-ProRule" id="PRU00148"/>
    </source>
</evidence>
<evidence type="ECO:0000256" key="5">
    <source>
        <dbReference type="SAM" id="MobiDB-lite"/>
    </source>
</evidence>
<reference key="1">
    <citation type="submission" date="2001-02" db="EMBL/GenBank/DDBJ databases">
        <title>Isolation of full-length cDNA clones from macaque brain cDNA libraries.</title>
        <authorList>
            <person name="Osada N."/>
            <person name="Hida M."/>
            <person name="Kusuda J."/>
            <person name="Tanuma R."/>
            <person name="Iseki K."/>
            <person name="Hirai M."/>
            <person name="Terao K."/>
            <person name="Suzuki Y."/>
            <person name="Sugano S."/>
            <person name="Hashimoto K."/>
        </authorList>
    </citation>
    <scope>NUCLEOTIDE SEQUENCE [LARGE SCALE MRNA]</scope>
    <source>
        <tissue>Frontal cortex</tissue>
    </source>
</reference>
<gene>
    <name type="primary">DAB1</name>
    <name type="ORF">QflA-11558</name>
</gene>
<organism>
    <name type="scientific">Macaca fascicularis</name>
    <name type="common">Crab-eating macaque</name>
    <name type="synonym">Cynomolgus monkey</name>
    <dbReference type="NCBI Taxonomy" id="9541"/>
    <lineage>
        <taxon>Eukaryota</taxon>
        <taxon>Metazoa</taxon>
        <taxon>Chordata</taxon>
        <taxon>Craniata</taxon>
        <taxon>Vertebrata</taxon>
        <taxon>Euteleostomi</taxon>
        <taxon>Mammalia</taxon>
        <taxon>Eutheria</taxon>
        <taxon>Euarchontoglires</taxon>
        <taxon>Primates</taxon>
        <taxon>Haplorrhini</taxon>
        <taxon>Catarrhini</taxon>
        <taxon>Cercopithecidae</taxon>
        <taxon>Cercopithecinae</taxon>
        <taxon>Macaca</taxon>
    </lineage>
</organism>